<accession>A7HKS0</accession>
<keyword id="KW-0143">Chaperone</keyword>
<keyword id="KW-0963">Cytoplasm</keyword>
<keyword id="KW-1185">Reference proteome</keyword>
<keyword id="KW-0690">Ribosome biogenesis</keyword>
<keyword id="KW-0698">rRNA processing</keyword>
<feature type="chain" id="PRO_0000321728" description="Ribosome maturation factor RimM">
    <location>
        <begin position="1"/>
        <end position="177"/>
    </location>
</feature>
<feature type="domain" description="PRC barrel" evidence="1">
    <location>
        <begin position="104"/>
        <end position="176"/>
    </location>
</feature>
<dbReference type="EMBL" id="CP000771">
    <property type="protein sequence ID" value="ABS60503.1"/>
    <property type="molecule type" value="Genomic_DNA"/>
</dbReference>
<dbReference type="RefSeq" id="WP_011993822.1">
    <property type="nucleotide sequence ID" value="NC_009718.1"/>
</dbReference>
<dbReference type="SMR" id="A7HKS0"/>
<dbReference type="STRING" id="381764.Fnod_0648"/>
<dbReference type="KEGG" id="fno:Fnod_0648"/>
<dbReference type="eggNOG" id="COG0806">
    <property type="taxonomic scope" value="Bacteria"/>
</dbReference>
<dbReference type="HOGENOM" id="CLU_077636_3_2_0"/>
<dbReference type="OrthoDB" id="9810331at2"/>
<dbReference type="Proteomes" id="UP000002415">
    <property type="component" value="Chromosome"/>
</dbReference>
<dbReference type="GO" id="GO:0005737">
    <property type="term" value="C:cytoplasm"/>
    <property type="evidence" value="ECO:0007669"/>
    <property type="project" value="UniProtKB-SubCell"/>
</dbReference>
<dbReference type="GO" id="GO:0005840">
    <property type="term" value="C:ribosome"/>
    <property type="evidence" value="ECO:0007669"/>
    <property type="project" value="InterPro"/>
</dbReference>
<dbReference type="GO" id="GO:0043022">
    <property type="term" value="F:ribosome binding"/>
    <property type="evidence" value="ECO:0007669"/>
    <property type="project" value="InterPro"/>
</dbReference>
<dbReference type="GO" id="GO:0042274">
    <property type="term" value="P:ribosomal small subunit biogenesis"/>
    <property type="evidence" value="ECO:0007669"/>
    <property type="project" value="UniProtKB-UniRule"/>
</dbReference>
<dbReference type="GO" id="GO:0006364">
    <property type="term" value="P:rRNA processing"/>
    <property type="evidence" value="ECO:0007669"/>
    <property type="project" value="UniProtKB-UniRule"/>
</dbReference>
<dbReference type="Gene3D" id="2.30.30.240">
    <property type="entry name" value="PRC-barrel domain"/>
    <property type="match status" value="1"/>
</dbReference>
<dbReference type="Gene3D" id="2.40.30.60">
    <property type="entry name" value="RimM"/>
    <property type="match status" value="1"/>
</dbReference>
<dbReference type="HAMAP" id="MF_00014">
    <property type="entry name" value="Ribosome_mat_RimM"/>
    <property type="match status" value="1"/>
</dbReference>
<dbReference type="InterPro" id="IPR011033">
    <property type="entry name" value="PRC_barrel-like_sf"/>
</dbReference>
<dbReference type="InterPro" id="IPR056792">
    <property type="entry name" value="PRC_RimM"/>
</dbReference>
<dbReference type="InterPro" id="IPR011961">
    <property type="entry name" value="RimM"/>
</dbReference>
<dbReference type="InterPro" id="IPR002676">
    <property type="entry name" value="RimM_N"/>
</dbReference>
<dbReference type="InterPro" id="IPR036976">
    <property type="entry name" value="RimM_N_sf"/>
</dbReference>
<dbReference type="InterPro" id="IPR009000">
    <property type="entry name" value="Transl_B-barrel_sf"/>
</dbReference>
<dbReference type="NCBIfam" id="TIGR02273">
    <property type="entry name" value="16S_RimM"/>
    <property type="match status" value="1"/>
</dbReference>
<dbReference type="PANTHER" id="PTHR33692">
    <property type="entry name" value="RIBOSOME MATURATION FACTOR RIMM"/>
    <property type="match status" value="1"/>
</dbReference>
<dbReference type="PANTHER" id="PTHR33692:SF1">
    <property type="entry name" value="RIBOSOME MATURATION FACTOR RIMM"/>
    <property type="match status" value="1"/>
</dbReference>
<dbReference type="Pfam" id="PF24986">
    <property type="entry name" value="PRC_RimM"/>
    <property type="match status" value="1"/>
</dbReference>
<dbReference type="Pfam" id="PF01782">
    <property type="entry name" value="RimM"/>
    <property type="match status" value="1"/>
</dbReference>
<dbReference type="SUPFAM" id="SSF50346">
    <property type="entry name" value="PRC-barrel domain"/>
    <property type="match status" value="1"/>
</dbReference>
<dbReference type="SUPFAM" id="SSF50447">
    <property type="entry name" value="Translation proteins"/>
    <property type="match status" value="1"/>
</dbReference>
<gene>
    <name evidence="1" type="primary">rimM</name>
    <name type="ordered locus">Fnod_0648</name>
</gene>
<name>RIMM_FERNB</name>
<proteinExistence type="inferred from homology"/>
<organism>
    <name type="scientific">Fervidobacterium nodosum (strain ATCC 35602 / DSM 5306 / Rt17-B1)</name>
    <dbReference type="NCBI Taxonomy" id="381764"/>
    <lineage>
        <taxon>Bacteria</taxon>
        <taxon>Thermotogati</taxon>
        <taxon>Thermotogota</taxon>
        <taxon>Thermotogae</taxon>
        <taxon>Thermotogales</taxon>
        <taxon>Fervidobacteriaceae</taxon>
        <taxon>Fervidobacterium</taxon>
    </lineage>
</organism>
<evidence type="ECO:0000255" key="1">
    <source>
        <dbReference type="HAMAP-Rule" id="MF_00014"/>
    </source>
</evidence>
<reference key="1">
    <citation type="submission" date="2007-07" db="EMBL/GenBank/DDBJ databases">
        <title>Complete sequence of Fervidobacterium nodosum Rt17-B1.</title>
        <authorList>
            <consortium name="US DOE Joint Genome Institute"/>
            <person name="Copeland A."/>
            <person name="Lucas S."/>
            <person name="Lapidus A."/>
            <person name="Barry K."/>
            <person name="Glavina del Rio T."/>
            <person name="Dalin E."/>
            <person name="Tice H."/>
            <person name="Pitluck S."/>
            <person name="Saunders E."/>
            <person name="Brettin T."/>
            <person name="Bruce D."/>
            <person name="Detter J.C."/>
            <person name="Han C."/>
            <person name="Schmutz J."/>
            <person name="Larimer F."/>
            <person name="Land M."/>
            <person name="Hauser L."/>
            <person name="Kyrpides N."/>
            <person name="Mikhailova N."/>
            <person name="Nelson K."/>
            <person name="Gogarten J.P."/>
            <person name="Noll K."/>
            <person name="Richardson P."/>
        </authorList>
    </citation>
    <scope>NUCLEOTIDE SEQUENCE [LARGE SCALE GENOMIC DNA]</scope>
    <source>
        <strain>ATCC 35602 / DSM 5306 / Rt17-B1</strain>
    </source>
</reference>
<protein>
    <recommendedName>
        <fullName evidence="1">Ribosome maturation factor RimM</fullName>
    </recommendedName>
</protein>
<comment type="function">
    <text evidence="1">An accessory protein needed during the final step in the assembly of 30S ribosomal subunit, possibly for assembly of the head region. Essential for efficient processing of 16S rRNA. May be needed both before and after RbfA during the maturation of 16S rRNA. It has affinity for free ribosomal 30S subunits but not for 70S ribosomes.</text>
</comment>
<comment type="subunit">
    <text evidence="1">Binds ribosomal protein uS19.</text>
</comment>
<comment type="subcellular location">
    <subcellularLocation>
        <location evidence="1">Cytoplasm</location>
    </subcellularLocation>
</comment>
<comment type="domain">
    <text evidence="1">The PRC barrel domain binds ribosomal protein uS19.</text>
</comment>
<comment type="similarity">
    <text evidence="1">Belongs to the RimM family.</text>
</comment>
<sequence>MMRRVEDLLKDKIPYGILSNTHGLNGDLKLYLFSNMPELVEKITEAVAYNESQKKFVIVKFSKVRKASDYFIVHLTGIDTISEAEKLKGFIIYLDKSFFPKSKDGEYYFFEILNAEVYDNAGEFIGIVEDIIETGNNDVIVVKKEKEEVLIPVIERYILKIDKEAKKIIVNMPEWLE</sequence>